<organism>
    <name type="scientific">Drosophila melanogaster</name>
    <name type="common">Fruit fly</name>
    <dbReference type="NCBI Taxonomy" id="7227"/>
    <lineage>
        <taxon>Eukaryota</taxon>
        <taxon>Metazoa</taxon>
        <taxon>Ecdysozoa</taxon>
        <taxon>Arthropoda</taxon>
        <taxon>Hexapoda</taxon>
        <taxon>Insecta</taxon>
        <taxon>Pterygota</taxon>
        <taxon>Neoptera</taxon>
        <taxon>Endopterygota</taxon>
        <taxon>Diptera</taxon>
        <taxon>Brachycera</taxon>
        <taxon>Muscomorpha</taxon>
        <taxon>Ephydroidea</taxon>
        <taxon>Drosophilidae</taxon>
        <taxon>Drosophila</taxon>
        <taxon>Sophophora</taxon>
    </lineage>
</organism>
<comment type="function">
    <text evidence="4">Vitellogenin is the major yolk protein of eggs where it is used as a food source during embryogenesis. Along with Yp2 and Yp3, and their receptor yl/yolkless, required for maintenance of microtubule plus-end orientation towards the posterior pole of oocytes (PubMed:33891588). Involved in polarized localization of germ plasm components, such as osk mRNA and vas protein, to the oocyte posterior cortex (PubMed:33891588). Receptor-mediated endocytosis by yl/yolkless is crucial for actin reorganization, mediated by osk isoform A/Long, required to anchor germ plasm components to the oocyte cortex (PubMed:33891588).</text>
</comment>
<comment type="subcellular location">
    <subcellularLocation>
        <location evidence="7">Secreted</location>
    </subcellularLocation>
    <subcellularLocation>
        <location evidence="3">Vesicle</location>
    </subcellularLocation>
    <text evidence="3">Yp1 secreted by fat body cells is taken up by oocytes via clathrin-mediated endocytosis and stored in endocytic derived lysosome-like vesicles called yolk granules.</text>
</comment>
<comment type="tissue specificity">
    <text evidence="6">Expressed in females only.</text>
</comment>
<comment type="developmental stage">
    <text evidence="3 6">Synthesized in the adult fat body and ovarian follicle cells and accumulates in the oocyte during oogenesis.</text>
</comment>
<comment type="induction">
    <text>By beta-ecdysone; in males.</text>
</comment>
<comment type="PTM">
    <text evidence="5">Tyrosine sulfation occurs in the female only and plays an essential functional role.</text>
</comment>
<comment type="disruption phenotype">
    <text evidence="4">Viable, even in combination with null mutations in Yp2 and Yp3.</text>
</comment>
<comment type="similarity">
    <text evidence="7">Belongs to the AB hydrolase superfamily. Lipase family.</text>
</comment>
<reference evidence="8" key="1">
    <citation type="journal article" date="1981" name="Nucleic Acids Res.">
        <title>Vitellogenin in Drosophila melanogaster: sequence of the yolk protein I gene and its flanking regions.</title>
        <authorList>
            <person name="Hovemann B."/>
            <person name="Galler R."/>
            <person name="Walldorf U."/>
            <person name="Kupper H."/>
            <person name="Bautz E.K.F."/>
        </authorList>
    </citation>
    <scope>NUCLEOTIDE SEQUENCE [GENOMIC DNA]</scope>
    <scope>TISSUE SPECIFICITY</scope>
    <scope>DEVELOPMENTAL STAGE</scope>
    <source>
        <strain evidence="8">Canton-S</strain>
    </source>
</reference>
<reference evidence="9" key="2">
    <citation type="journal article" date="1981" name="Nucleic Acids Res.">
        <title>The sequence of the Drosophila melanogaster gene for yolk protein 1.</title>
        <authorList>
            <person name="Hung M.-C."/>
            <person name="Wensink P.C."/>
        </authorList>
    </citation>
    <scope>NUCLEOTIDE SEQUENCE [GENOMIC DNA]</scope>
</reference>
<reference key="3">
    <citation type="journal article" date="2000" name="Science">
        <title>The genome sequence of Drosophila melanogaster.</title>
        <authorList>
            <person name="Adams M.D."/>
            <person name="Celniker S.E."/>
            <person name="Holt R.A."/>
            <person name="Evans C.A."/>
            <person name="Gocayne J.D."/>
            <person name="Amanatides P.G."/>
            <person name="Scherer S.E."/>
            <person name="Li P.W."/>
            <person name="Hoskins R.A."/>
            <person name="Galle R.F."/>
            <person name="George R.A."/>
            <person name="Lewis S.E."/>
            <person name="Richards S."/>
            <person name="Ashburner M."/>
            <person name="Henderson S.N."/>
            <person name="Sutton G.G."/>
            <person name="Wortman J.R."/>
            <person name="Yandell M.D."/>
            <person name="Zhang Q."/>
            <person name="Chen L.X."/>
            <person name="Brandon R.C."/>
            <person name="Rogers Y.-H.C."/>
            <person name="Blazej R.G."/>
            <person name="Champe M."/>
            <person name="Pfeiffer B.D."/>
            <person name="Wan K.H."/>
            <person name="Doyle C."/>
            <person name="Baxter E.G."/>
            <person name="Helt G."/>
            <person name="Nelson C.R."/>
            <person name="Miklos G.L.G."/>
            <person name="Abril J.F."/>
            <person name="Agbayani A."/>
            <person name="An H.-J."/>
            <person name="Andrews-Pfannkoch C."/>
            <person name="Baldwin D."/>
            <person name="Ballew R.M."/>
            <person name="Basu A."/>
            <person name="Baxendale J."/>
            <person name="Bayraktaroglu L."/>
            <person name="Beasley E.M."/>
            <person name="Beeson K.Y."/>
            <person name="Benos P.V."/>
            <person name="Berman B.P."/>
            <person name="Bhandari D."/>
            <person name="Bolshakov S."/>
            <person name="Borkova D."/>
            <person name="Botchan M.R."/>
            <person name="Bouck J."/>
            <person name="Brokstein P."/>
            <person name="Brottier P."/>
            <person name="Burtis K.C."/>
            <person name="Busam D.A."/>
            <person name="Butler H."/>
            <person name="Cadieu E."/>
            <person name="Center A."/>
            <person name="Chandra I."/>
            <person name="Cherry J.M."/>
            <person name="Cawley S."/>
            <person name="Dahlke C."/>
            <person name="Davenport L.B."/>
            <person name="Davies P."/>
            <person name="de Pablos B."/>
            <person name="Delcher A."/>
            <person name="Deng Z."/>
            <person name="Mays A.D."/>
            <person name="Dew I."/>
            <person name="Dietz S.M."/>
            <person name="Dodson K."/>
            <person name="Doup L.E."/>
            <person name="Downes M."/>
            <person name="Dugan-Rocha S."/>
            <person name="Dunkov B.C."/>
            <person name="Dunn P."/>
            <person name="Durbin K.J."/>
            <person name="Evangelista C.C."/>
            <person name="Ferraz C."/>
            <person name="Ferriera S."/>
            <person name="Fleischmann W."/>
            <person name="Fosler C."/>
            <person name="Gabrielian A.E."/>
            <person name="Garg N.S."/>
            <person name="Gelbart W.M."/>
            <person name="Glasser K."/>
            <person name="Glodek A."/>
            <person name="Gong F."/>
            <person name="Gorrell J.H."/>
            <person name="Gu Z."/>
            <person name="Guan P."/>
            <person name="Harris M."/>
            <person name="Harris N.L."/>
            <person name="Harvey D.A."/>
            <person name="Heiman T.J."/>
            <person name="Hernandez J.R."/>
            <person name="Houck J."/>
            <person name="Hostin D."/>
            <person name="Houston K.A."/>
            <person name="Howland T.J."/>
            <person name="Wei M.-H."/>
            <person name="Ibegwam C."/>
            <person name="Jalali M."/>
            <person name="Kalush F."/>
            <person name="Karpen G.H."/>
            <person name="Ke Z."/>
            <person name="Kennison J.A."/>
            <person name="Ketchum K.A."/>
            <person name="Kimmel B.E."/>
            <person name="Kodira C.D."/>
            <person name="Kraft C.L."/>
            <person name="Kravitz S."/>
            <person name="Kulp D."/>
            <person name="Lai Z."/>
            <person name="Lasko P."/>
            <person name="Lei Y."/>
            <person name="Levitsky A.A."/>
            <person name="Li J.H."/>
            <person name="Li Z."/>
            <person name="Liang Y."/>
            <person name="Lin X."/>
            <person name="Liu X."/>
            <person name="Mattei B."/>
            <person name="McIntosh T.C."/>
            <person name="McLeod M.P."/>
            <person name="McPherson D."/>
            <person name="Merkulov G."/>
            <person name="Milshina N.V."/>
            <person name="Mobarry C."/>
            <person name="Morris J."/>
            <person name="Moshrefi A."/>
            <person name="Mount S.M."/>
            <person name="Moy M."/>
            <person name="Murphy B."/>
            <person name="Murphy L."/>
            <person name="Muzny D.M."/>
            <person name="Nelson D.L."/>
            <person name="Nelson D.R."/>
            <person name="Nelson K.A."/>
            <person name="Nixon K."/>
            <person name="Nusskern D.R."/>
            <person name="Pacleb J.M."/>
            <person name="Palazzolo M."/>
            <person name="Pittman G.S."/>
            <person name="Pan S."/>
            <person name="Pollard J."/>
            <person name="Puri V."/>
            <person name="Reese M.G."/>
            <person name="Reinert K."/>
            <person name="Remington K."/>
            <person name="Saunders R.D.C."/>
            <person name="Scheeler F."/>
            <person name="Shen H."/>
            <person name="Shue B.C."/>
            <person name="Siden-Kiamos I."/>
            <person name="Simpson M."/>
            <person name="Skupski M.P."/>
            <person name="Smith T.J."/>
            <person name="Spier E."/>
            <person name="Spradling A.C."/>
            <person name="Stapleton M."/>
            <person name="Strong R."/>
            <person name="Sun E."/>
            <person name="Svirskas R."/>
            <person name="Tector C."/>
            <person name="Turner R."/>
            <person name="Venter E."/>
            <person name="Wang A.H."/>
            <person name="Wang X."/>
            <person name="Wang Z.-Y."/>
            <person name="Wassarman D.A."/>
            <person name="Weinstock G.M."/>
            <person name="Weissenbach J."/>
            <person name="Williams S.M."/>
            <person name="Woodage T."/>
            <person name="Worley K.C."/>
            <person name="Wu D."/>
            <person name="Yang S."/>
            <person name="Yao Q.A."/>
            <person name="Ye J."/>
            <person name="Yeh R.-F."/>
            <person name="Zaveri J.S."/>
            <person name="Zhan M."/>
            <person name="Zhang G."/>
            <person name="Zhao Q."/>
            <person name="Zheng L."/>
            <person name="Zheng X.H."/>
            <person name="Zhong F.N."/>
            <person name="Zhong W."/>
            <person name="Zhou X."/>
            <person name="Zhu S.C."/>
            <person name="Zhu X."/>
            <person name="Smith H.O."/>
            <person name="Gibbs R.A."/>
            <person name="Myers E.W."/>
            <person name="Rubin G.M."/>
            <person name="Venter J.C."/>
        </authorList>
    </citation>
    <scope>NUCLEOTIDE SEQUENCE [LARGE SCALE GENOMIC DNA]</scope>
    <source>
        <strain>Berkeley</strain>
    </source>
</reference>
<reference key="4">
    <citation type="journal article" date="2002" name="Genome Biol.">
        <title>Annotation of the Drosophila melanogaster euchromatic genome: a systematic review.</title>
        <authorList>
            <person name="Misra S."/>
            <person name="Crosby M.A."/>
            <person name="Mungall C.J."/>
            <person name="Matthews B.B."/>
            <person name="Campbell K.S."/>
            <person name="Hradecky P."/>
            <person name="Huang Y."/>
            <person name="Kaminker J.S."/>
            <person name="Millburn G.H."/>
            <person name="Prochnik S.E."/>
            <person name="Smith C.D."/>
            <person name="Tupy J.L."/>
            <person name="Whitfield E.J."/>
            <person name="Bayraktaroglu L."/>
            <person name="Berman B.P."/>
            <person name="Bettencourt B.R."/>
            <person name="Celniker S.E."/>
            <person name="de Grey A.D.N.J."/>
            <person name="Drysdale R.A."/>
            <person name="Harris N.L."/>
            <person name="Richter J."/>
            <person name="Russo S."/>
            <person name="Schroeder A.J."/>
            <person name="Shu S.Q."/>
            <person name="Stapleton M."/>
            <person name="Yamada C."/>
            <person name="Ashburner M."/>
            <person name="Gelbart W.M."/>
            <person name="Rubin G.M."/>
            <person name="Lewis S.E."/>
        </authorList>
    </citation>
    <scope>GENOME REANNOTATION</scope>
    <source>
        <strain>Berkeley</strain>
    </source>
</reference>
<reference key="5">
    <citation type="journal article" date="2002" name="Genome Biol.">
        <title>A Drosophila full-length cDNA resource.</title>
        <authorList>
            <person name="Stapleton M."/>
            <person name="Carlson J.W."/>
            <person name="Brokstein P."/>
            <person name="Yu C."/>
            <person name="Champe M."/>
            <person name="George R.A."/>
            <person name="Guarin H."/>
            <person name="Kronmiller B."/>
            <person name="Pacleb J.M."/>
            <person name="Park S."/>
            <person name="Wan K.H."/>
            <person name="Rubin G.M."/>
            <person name="Celniker S.E."/>
        </authorList>
    </citation>
    <scope>NUCLEOTIDE SEQUENCE [LARGE SCALE MRNA]</scope>
    <source>
        <strain>Berkeley</strain>
        <tissue>Head</tissue>
    </source>
</reference>
<reference key="6">
    <citation type="journal article" date="1982" name="Nucleic Acids Res.">
        <title>Vitellogenin in Drosophila melanogaster: a comparison of the YPI and YPII genes and their transcription products.</title>
        <authorList>
            <person name="Hovemann B."/>
            <person name="Galler R."/>
        </authorList>
    </citation>
    <scope>NUCLEOTIDE SEQUENCE [GENOMIC DNA] OF 1-54</scope>
</reference>
<reference key="7">
    <citation type="journal article" date="1985" name="J. Biol. Chem.">
        <title>Tyrosine sulfation of yolk proteins 1, 2, and 3 in Drosophila melanogaster.</title>
        <authorList>
            <person name="Baeuerle P.A."/>
            <person name="Huttner W.B."/>
        </authorList>
    </citation>
    <scope>SULFATION</scope>
</reference>
<reference key="8">
    <citation type="journal article" date="2008" name="J. Proteome Res.">
        <title>Phosphoproteome analysis of Drosophila melanogaster embryos.</title>
        <authorList>
            <person name="Zhai B."/>
            <person name="Villen J."/>
            <person name="Beausoleil S.A."/>
            <person name="Mintseris J."/>
            <person name="Gygi S.P."/>
        </authorList>
    </citation>
    <scope>PHOSPHORYLATION [LARGE SCALE ANALYSIS] AT TYR-171; SER-175; SER-185; SER-186; TYR-190; SER-191 AND SER-435</scope>
    <scope>IDENTIFICATION BY MASS SPECTROMETRY</scope>
    <source>
        <tissue>Embryo</tissue>
    </source>
</reference>
<reference key="9">
    <citation type="journal article" date="2009" name="J. Cell Sci.">
        <title>Interplay between Rab5 and PtdIns(4,5)P2 controls early endocytosis in the Drosophila germline.</title>
        <authorList>
            <person name="Compagnon J."/>
            <person name="Gervais L."/>
            <person name="Roman M.S."/>
            <person name="Chamot-Boeuf S."/>
            <person name="Guichet A."/>
        </authorList>
    </citation>
    <scope>SUBCELLULAR LOCATION</scope>
    <scope>DEVELOPMENTAL STAGE</scope>
</reference>
<reference key="10">
    <citation type="journal article" date="2021" name="PLoS Biol.">
        <title>Receptor-mediated yolk uptake is required for oskar mRNA localization and cortical anchorage of germ plasm components in the Drosophila oocyte.</title>
        <authorList>
            <person name="Tanaka T."/>
            <person name="Tani N."/>
            <person name="Nakamura A."/>
        </authorList>
    </citation>
    <scope>FUNCTION</scope>
    <scope>DISRUPTION PHENOTYPE</scope>
</reference>
<protein>
    <recommendedName>
        <fullName>Vitellogenin-1</fullName>
    </recommendedName>
    <alternativeName>
        <fullName>Vitellogenin I</fullName>
    </alternativeName>
    <alternativeName>
        <fullName>Yolk protein 1</fullName>
    </alternativeName>
</protein>
<feature type="signal peptide">
    <location>
        <begin position="1"/>
        <end position="20"/>
    </location>
</feature>
<feature type="chain" id="PRO_0000017814" description="Vitellogenin-1">
    <location>
        <begin position="21"/>
        <end position="439"/>
    </location>
</feature>
<feature type="region of interest" description="Disordered" evidence="1">
    <location>
        <begin position="158"/>
        <end position="196"/>
    </location>
</feature>
<feature type="region of interest" description="Disordered" evidence="1">
    <location>
        <begin position="407"/>
        <end position="439"/>
    </location>
</feature>
<feature type="compositionally biased region" description="Polar residues" evidence="1">
    <location>
        <begin position="158"/>
        <end position="175"/>
    </location>
</feature>
<feature type="compositionally biased region" description="Polar residues" evidence="1">
    <location>
        <begin position="416"/>
        <end position="433"/>
    </location>
</feature>
<feature type="modified residue" description="Phosphotyrosine" evidence="2">
    <location>
        <position position="171"/>
    </location>
</feature>
<feature type="modified residue" description="Phosphoserine" evidence="2">
    <location>
        <position position="175"/>
    </location>
</feature>
<feature type="modified residue" description="Phosphoserine" evidence="2">
    <location>
        <position position="185"/>
    </location>
</feature>
<feature type="modified residue" description="Phosphoserine" evidence="2">
    <location>
        <position position="186"/>
    </location>
</feature>
<feature type="modified residue" description="Phosphotyrosine" evidence="2">
    <location>
        <position position="190"/>
    </location>
</feature>
<feature type="modified residue" description="Phosphoserine" evidence="2">
    <location>
        <position position="191"/>
    </location>
</feature>
<feature type="modified residue" description="Phosphoserine" evidence="2">
    <location>
        <position position="435"/>
    </location>
</feature>
<feature type="sequence conflict" description="In Ref. 5; AAL68367." evidence="7" ref="5">
    <original>G</original>
    <variation>R</variation>
    <location>
        <position position="41"/>
    </location>
</feature>
<keyword id="KW-0597">Phosphoprotein</keyword>
<keyword id="KW-1185">Reference proteome</keyword>
<keyword id="KW-0964">Secreted</keyword>
<keyword id="KW-0732">Signal</keyword>
<keyword id="KW-0765">Sulfation</keyword>
<proteinExistence type="evidence at protein level"/>
<name>VIT1_DROME</name>
<evidence type="ECO:0000256" key="1">
    <source>
        <dbReference type="SAM" id="MobiDB-lite"/>
    </source>
</evidence>
<evidence type="ECO:0000269" key="2">
    <source>
    </source>
</evidence>
<evidence type="ECO:0000269" key="3">
    <source>
    </source>
</evidence>
<evidence type="ECO:0000269" key="4">
    <source>
    </source>
</evidence>
<evidence type="ECO:0000269" key="5">
    <source>
    </source>
</evidence>
<evidence type="ECO:0000269" key="6">
    <source>
    </source>
</evidence>
<evidence type="ECO:0000305" key="7"/>
<evidence type="ECO:0000312" key="8">
    <source>
        <dbReference type="EMBL" id="CAA23502.1"/>
    </source>
</evidence>
<evidence type="ECO:0000312" key="9">
    <source>
        <dbReference type="EMBL" id="CAA25709.1"/>
    </source>
</evidence>
<accession>P02843</accession>
<accession>Q8SXV7</accession>
<accession>Q9W2Y9</accession>
<gene>
    <name type="primary">Yp1</name>
    <name type="ORF">CG2985</name>
</gene>
<dbReference type="EMBL" id="V00248">
    <property type="protein sequence ID" value="CAA23502.1"/>
    <property type="molecule type" value="Genomic_DNA"/>
</dbReference>
<dbReference type="EMBL" id="X01524">
    <property type="protein sequence ID" value="CAA25709.1"/>
    <property type="molecule type" value="Genomic_DNA"/>
</dbReference>
<dbReference type="EMBL" id="AE014298">
    <property type="protein sequence ID" value="AAF46548.1"/>
    <property type="molecule type" value="Genomic_DNA"/>
</dbReference>
<dbReference type="EMBL" id="AY075560">
    <property type="protein sequence ID" value="AAL68367.1"/>
    <property type="molecule type" value="mRNA"/>
</dbReference>
<dbReference type="PIR" id="A93744">
    <property type="entry name" value="VJFF1"/>
</dbReference>
<dbReference type="RefSeq" id="NP_001285071.1">
    <property type="nucleotide sequence ID" value="NM_001298142.1"/>
</dbReference>
<dbReference type="RefSeq" id="NP_511103.1">
    <property type="nucleotide sequence ID" value="NM_078548.3"/>
</dbReference>
<dbReference type="SMR" id="P02843"/>
<dbReference type="BioGRID" id="58375">
    <property type="interactions" value="40"/>
</dbReference>
<dbReference type="DIP" id="DIP-18442N"/>
<dbReference type="FunCoup" id="P02843">
    <property type="interactions" value="81"/>
</dbReference>
<dbReference type="IntAct" id="P02843">
    <property type="interactions" value="50"/>
</dbReference>
<dbReference type="MINT" id="P02843"/>
<dbReference type="STRING" id="7227.FBpp0312020"/>
<dbReference type="ESTHER" id="drome-1vite">
    <property type="family name" value="Yolk-Protein_dipter"/>
</dbReference>
<dbReference type="iPTMnet" id="P02843"/>
<dbReference type="PaxDb" id="7227-FBpp0071354"/>
<dbReference type="DNASU" id="31939"/>
<dbReference type="EnsemblMetazoa" id="FBtr0071419">
    <property type="protein sequence ID" value="FBpp0071354"/>
    <property type="gene ID" value="FBgn0004045"/>
</dbReference>
<dbReference type="EnsemblMetazoa" id="FBtr0346261">
    <property type="protein sequence ID" value="FBpp0312020"/>
    <property type="gene ID" value="FBgn0004045"/>
</dbReference>
<dbReference type="GeneID" id="31939"/>
<dbReference type="KEGG" id="dme:Dmel_CG2985"/>
<dbReference type="AGR" id="FB:FBgn0004045"/>
<dbReference type="CTD" id="31939"/>
<dbReference type="FlyBase" id="FBgn0004045">
    <property type="gene designation" value="Yp1"/>
</dbReference>
<dbReference type="VEuPathDB" id="VectorBase:FBgn0004045"/>
<dbReference type="eggNOG" id="ENOG502SRF1">
    <property type="taxonomic scope" value="Eukaryota"/>
</dbReference>
<dbReference type="HOGENOM" id="CLU_027171_6_0_1"/>
<dbReference type="InParanoid" id="P02843"/>
<dbReference type="OMA" id="YMGIDAA"/>
<dbReference type="OrthoDB" id="6770740at2759"/>
<dbReference type="PhylomeDB" id="P02843"/>
<dbReference type="Reactome" id="R-DME-1483166">
    <property type="pathway name" value="Synthesis of PA"/>
</dbReference>
<dbReference type="SignaLink" id="P02843"/>
<dbReference type="BioGRID-ORCS" id="31939">
    <property type="hits" value="0 hits in 1 CRISPR screen"/>
</dbReference>
<dbReference type="ChiTaRS" id="Yp1">
    <property type="organism name" value="fly"/>
</dbReference>
<dbReference type="GenomeRNAi" id="31939"/>
<dbReference type="PRO" id="PR:P02843"/>
<dbReference type="Proteomes" id="UP000000803">
    <property type="component" value="Chromosome X"/>
</dbReference>
<dbReference type="Bgee" id="FBgn0004045">
    <property type="expression patterns" value="Expressed in adult abdomen and 179 other cell types or tissues"/>
</dbReference>
<dbReference type="ExpressionAtlas" id="P02843">
    <property type="expression patterns" value="baseline and differential"/>
</dbReference>
<dbReference type="GO" id="GO:0005576">
    <property type="term" value="C:extracellular region"/>
    <property type="evidence" value="ECO:0000304"/>
    <property type="project" value="UniProtKB"/>
</dbReference>
<dbReference type="GO" id="GO:0005615">
    <property type="term" value="C:extracellular space"/>
    <property type="evidence" value="ECO:0000318"/>
    <property type="project" value="GO_Central"/>
</dbReference>
<dbReference type="GO" id="GO:0031982">
    <property type="term" value="C:vesicle"/>
    <property type="evidence" value="ECO:0007669"/>
    <property type="project" value="UniProtKB-SubCell"/>
</dbReference>
<dbReference type="GO" id="GO:0017171">
    <property type="term" value="F:serine hydrolase activity"/>
    <property type="evidence" value="ECO:0007005"/>
    <property type="project" value="FlyBase"/>
</dbReference>
<dbReference type="GO" id="GO:0016042">
    <property type="term" value="P:lipid catabolic process"/>
    <property type="evidence" value="ECO:0000318"/>
    <property type="project" value="GO_Central"/>
</dbReference>
<dbReference type="GO" id="GO:0007548">
    <property type="term" value="P:sex differentiation"/>
    <property type="evidence" value="ECO:0000304"/>
    <property type="project" value="FlyBase"/>
</dbReference>
<dbReference type="FunFam" id="3.40.50.1820:FF:000227">
    <property type="entry name" value="Yolk protein 2"/>
    <property type="match status" value="1"/>
</dbReference>
<dbReference type="Gene3D" id="3.40.50.1820">
    <property type="entry name" value="alpha/beta hydrolase"/>
    <property type="match status" value="1"/>
</dbReference>
<dbReference type="InterPro" id="IPR029058">
    <property type="entry name" value="AB_hydrolase_fold"/>
</dbReference>
<dbReference type="InterPro" id="IPR013818">
    <property type="entry name" value="Lipase"/>
</dbReference>
<dbReference type="InterPro" id="IPR000734">
    <property type="entry name" value="TAG_lipase"/>
</dbReference>
<dbReference type="PANTHER" id="PTHR11610:SF149">
    <property type="entry name" value="FI01450P-RELATED"/>
    <property type="match status" value="1"/>
</dbReference>
<dbReference type="PANTHER" id="PTHR11610">
    <property type="entry name" value="LIPASE"/>
    <property type="match status" value="1"/>
</dbReference>
<dbReference type="Pfam" id="PF00151">
    <property type="entry name" value="Lipase"/>
    <property type="match status" value="1"/>
</dbReference>
<dbReference type="SUPFAM" id="SSF53474">
    <property type="entry name" value="alpha/beta-Hydrolases"/>
    <property type="match status" value="1"/>
</dbReference>
<sequence length="439" mass="48712">MNPMRVLSLLACLAVAALAKPNGRMDNSVNQALKPSQWLSGSQLEAIPALDDFTIERLENMNLERGAELLQQVYHLSQIHHNVEPNYVPSGIQVYVPKPNGDKTVAPLNEMIQRLKQKQNFGEDEVTIIVTGLPQTSETVKKATRKLVQAYMQRYNLQQQRQHGKNGNQDYQDQSNEQRKNQRTSSEEDYSEEVKNAKTQSGDIIVIDLGSKLNTYERYAMLDIEKTGAKIGKWIVQMVNELDMPFDTIHLIGQNVGAHVAGAAAQEFTRLTGHKLRRVTGLDPSKIVAKSKNTLTGLARGDAEFVDAIHTSVYGMGTPIRSGDVDFYPNGPAAGVPGASNVVEAAMRATRYFAESVRPGNERSFPAVPANSLQQYKQNDGFGKRAYMGIDTAHDLEGDYILQVNPKSPFGRNAPAQKQSSYHGVHQAWNTNQDSKDYQ</sequence>